<dbReference type="EC" id="6.5.1.2" evidence="1"/>
<dbReference type="EMBL" id="CP001037">
    <property type="protein sequence ID" value="ACC78970.1"/>
    <property type="molecule type" value="Genomic_DNA"/>
</dbReference>
<dbReference type="RefSeq" id="WP_012406999.1">
    <property type="nucleotide sequence ID" value="NC_010628.1"/>
</dbReference>
<dbReference type="SMR" id="B2J3P0"/>
<dbReference type="STRING" id="63737.Npun_F0173"/>
<dbReference type="EnsemblBacteria" id="ACC78970">
    <property type="protein sequence ID" value="ACC78970"/>
    <property type="gene ID" value="Npun_F0173"/>
</dbReference>
<dbReference type="KEGG" id="npu:Npun_F0173"/>
<dbReference type="eggNOG" id="COG0272">
    <property type="taxonomic scope" value="Bacteria"/>
</dbReference>
<dbReference type="HOGENOM" id="CLU_007764_2_1_3"/>
<dbReference type="OrthoDB" id="9759736at2"/>
<dbReference type="PhylomeDB" id="B2J3P0"/>
<dbReference type="Proteomes" id="UP000001191">
    <property type="component" value="Chromosome"/>
</dbReference>
<dbReference type="GO" id="GO:0005829">
    <property type="term" value="C:cytosol"/>
    <property type="evidence" value="ECO:0007669"/>
    <property type="project" value="TreeGrafter"/>
</dbReference>
<dbReference type="GO" id="GO:0003677">
    <property type="term" value="F:DNA binding"/>
    <property type="evidence" value="ECO:0007669"/>
    <property type="project" value="InterPro"/>
</dbReference>
<dbReference type="GO" id="GO:0003911">
    <property type="term" value="F:DNA ligase (NAD+) activity"/>
    <property type="evidence" value="ECO:0007669"/>
    <property type="project" value="UniProtKB-UniRule"/>
</dbReference>
<dbReference type="GO" id="GO:0046872">
    <property type="term" value="F:metal ion binding"/>
    <property type="evidence" value="ECO:0007669"/>
    <property type="project" value="UniProtKB-KW"/>
</dbReference>
<dbReference type="GO" id="GO:0006281">
    <property type="term" value="P:DNA repair"/>
    <property type="evidence" value="ECO:0007669"/>
    <property type="project" value="UniProtKB-KW"/>
</dbReference>
<dbReference type="GO" id="GO:0006260">
    <property type="term" value="P:DNA replication"/>
    <property type="evidence" value="ECO:0007669"/>
    <property type="project" value="UniProtKB-KW"/>
</dbReference>
<dbReference type="CDD" id="cd17748">
    <property type="entry name" value="BRCT_DNA_ligase_like"/>
    <property type="match status" value="1"/>
</dbReference>
<dbReference type="CDD" id="cd00114">
    <property type="entry name" value="LIGANc"/>
    <property type="match status" value="1"/>
</dbReference>
<dbReference type="FunFam" id="1.10.150.20:FF:000006">
    <property type="entry name" value="DNA ligase"/>
    <property type="match status" value="1"/>
</dbReference>
<dbReference type="FunFam" id="1.10.150.20:FF:000007">
    <property type="entry name" value="DNA ligase"/>
    <property type="match status" value="1"/>
</dbReference>
<dbReference type="FunFam" id="2.40.50.140:FF:000012">
    <property type="entry name" value="DNA ligase"/>
    <property type="match status" value="1"/>
</dbReference>
<dbReference type="FunFam" id="3.30.470.30:FF:000001">
    <property type="entry name" value="DNA ligase"/>
    <property type="match status" value="1"/>
</dbReference>
<dbReference type="Gene3D" id="6.20.10.30">
    <property type="match status" value="1"/>
</dbReference>
<dbReference type="Gene3D" id="1.10.150.20">
    <property type="entry name" value="5' to 3' exonuclease, C-terminal subdomain"/>
    <property type="match status" value="2"/>
</dbReference>
<dbReference type="Gene3D" id="3.40.50.10190">
    <property type="entry name" value="BRCT domain"/>
    <property type="match status" value="1"/>
</dbReference>
<dbReference type="Gene3D" id="3.30.470.30">
    <property type="entry name" value="DNA ligase/mRNA capping enzyme"/>
    <property type="match status" value="1"/>
</dbReference>
<dbReference type="Gene3D" id="1.10.287.610">
    <property type="entry name" value="Helix hairpin bin"/>
    <property type="match status" value="1"/>
</dbReference>
<dbReference type="Gene3D" id="2.40.50.140">
    <property type="entry name" value="Nucleic acid-binding proteins"/>
    <property type="match status" value="1"/>
</dbReference>
<dbReference type="HAMAP" id="MF_01588">
    <property type="entry name" value="DNA_ligase_A"/>
    <property type="match status" value="1"/>
</dbReference>
<dbReference type="InterPro" id="IPR001357">
    <property type="entry name" value="BRCT_dom"/>
</dbReference>
<dbReference type="InterPro" id="IPR036420">
    <property type="entry name" value="BRCT_dom_sf"/>
</dbReference>
<dbReference type="InterPro" id="IPR041663">
    <property type="entry name" value="DisA/LigA_HHH"/>
</dbReference>
<dbReference type="InterPro" id="IPR001679">
    <property type="entry name" value="DNA_ligase"/>
</dbReference>
<dbReference type="InterPro" id="IPR018239">
    <property type="entry name" value="DNA_ligase_AS"/>
</dbReference>
<dbReference type="InterPro" id="IPR033136">
    <property type="entry name" value="DNA_ligase_CS"/>
</dbReference>
<dbReference type="InterPro" id="IPR013839">
    <property type="entry name" value="DNAligase_adenylation"/>
</dbReference>
<dbReference type="InterPro" id="IPR013840">
    <property type="entry name" value="DNAligase_N"/>
</dbReference>
<dbReference type="InterPro" id="IPR003583">
    <property type="entry name" value="Hlx-hairpin-Hlx_DNA-bd_motif"/>
</dbReference>
<dbReference type="InterPro" id="IPR012340">
    <property type="entry name" value="NA-bd_OB-fold"/>
</dbReference>
<dbReference type="InterPro" id="IPR004150">
    <property type="entry name" value="NAD_DNA_ligase_OB"/>
</dbReference>
<dbReference type="InterPro" id="IPR010994">
    <property type="entry name" value="RuvA_2-like"/>
</dbReference>
<dbReference type="InterPro" id="IPR004149">
    <property type="entry name" value="Znf_DNAligase_C4"/>
</dbReference>
<dbReference type="NCBIfam" id="TIGR00575">
    <property type="entry name" value="dnlj"/>
    <property type="match status" value="1"/>
</dbReference>
<dbReference type="NCBIfam" id="NF005932">
    <property type="entry name" value="PRK07956.1"/>
    <property type="match status" value="1"/>
</dbReference>
<dbReference type="PANTHER" id="PTHR23389">
    <property type="entry name" value="CHROMOSOME TRANSMISSION FIDELITY FACTOR 18"/>
    <property type="match status" value="1"/>
</dbReference>
<dbReference type="PANTHER" id="PTHR23389:SF9">
    <property type="entry name" value="DNA LIGASE"/>
    <property type="match status" value="1"/>
</dbReference>
<dbReference type="Pfam" id="PF00533">
    <property type="entry name" value="BRCT"/>
    <property type="match status" value="1"/>
</dbReference>
<dbReference type="Pfam" id="PF01653">
    <property type="entry name" value="DNA_ligase_aden"/>
    <property type="match status" value="1"/>
</dbReference>
<dbReference type="Pfam" id="PF03120">
    <property type="entry name" value="DNA_ligase_OB"/>
    <property type="match status" value="1"/>
</dbReference>
<dbReference type="Pfam" id="PF03119">
    <property type="entry name" value="DNA_ligase_ZBD"/>
    <property type="match status" value="1"/>
</dbReference>
<dbReference type="Pfam" id="PF12826">
    <property type="entry name" value="HHH_2"/>
    <property type="match status" value="1"/>
</dbReference>
<dbReference type="Pfam" id="PF14520">
    <property type="entry name" value="HHH_5"/>
    <property type="match status" value="1"/>
</dbReference>
<dbReference type="Pfam" id="PF22745">
    <property type="entry name" value="Nlig-Ia"/>
    <property type="match status" value="1"/>
</dbReference>
<dbReference type="PIRSF" id="PIRSF001604">
    <property type="entry name" value="LigA"/>
    <property type="match status" value="1"/>
</dbReference>
<dbReference type="SMART" id="SM00292">
    <property type="entry name" value="BRCT"/>
    <property type="match status" value="1"/>
</dbReference>
<dbReference type="SMART" id="SM00278">
    <property type="entry name" value="HhH1"/>
    <property type="match status" value="3"/>
</dbReference>
<dbReference type="SMART" id="SM00532">
    <property type="entry name" value="LIGANc"/>
    <property type="match status" value="1"/>
</dbReference>
<dbReference type="SUPFAM" id="SSF52113">
    <property type="entry name" value="BRCT domain"/>
    <property type="match status" value="1"/>
</dbReference>
<dbReference type="SUPFAM" id="SSF56091">
    <property type="entry name" value="DNA ligase/mRNA capping enzyme, catalytic domain"/>
    <property type="match status" value="1"/>
</dbReference>
<dbReference type="SUPFAM" id="SSF50249">
    <property type="entry name" value="Nucleic acid-binding proteins"/>
    <property type="match status" value="1"/>
</dbReference>
<dbReference type="SUPFAM" id="SSF47781">
    <property type="entry name" value="RuvA domain 2-like"/>
    <property type="match status" value="1"/>
</dbReference>
<dbReference type="PROSITE" id="PS50172">
    <property type="entry name" value="BRCT"/>
    <property type="match status" value="1"/>
</dbReference>
<dbReference type="PROSITE" id="PS01055">
    <property type="entry name" value="DNA_LIGASE_N1"/>
    <property type="match status" value="1"/>
</dbReference>
<dbReference type="PROSITE" id="PS01056">
    <property type="entry name" value="DNA_LIGASE_N2"/>
    <property type="match status" value="1"/>
</dbReference>
<evidence type="ECO:0000255" key="1">
    <source>
        <dbReference type="HAMAP-Rule" id="MF_01588"/>
    </source>
</evidence>
<name>DNLJ_NOSP7</name>
<reference key="1">
    <citation type="journal article" date="2013" name="Plant Physiol.">
        <title>A Nostoc punctiforme Sugar Transporter Necessary to Establish a Cyanobacterium-Plant Symbiosis.</title>
        <authorList>
            <person name="Ekman M."/>
            <person name="Picossi S."/>
            <person name="Campbell E.L."/>
            <person name="Meeks J.C."/>
            <person name="Flores E."/>
        </authorList>
    </citation>
    <scope>NUCLEOTIDE SEQUENCE [LARGE SCALE GENOMIC DNA]</scope>
    <source>
        <strain>ATCC 29133 / PCC 73102</strain>
    </source>
</reference>
<sequence>MTQIKPEVKRTEELRQLLQQASYAYYVLDTPIMEDSVYDQLYRELQQLEIQYPELTAPDSPTQRVGERPATQFTSVRHNIPLYSLENAFNIDELQGWDQRWRRQVPKIDSVEYVTELKIDGSALALTYQDGILVRGTTRGDGVMGEDITQNVRTIRSIPLRLNFEGLEILERVEVRGEAFLPLEVFKQINEERQKAGEQLFANPRNAAAGTLRQLDSRIVAKRRLAFFGYTLHIPGRDDTSIANTQWEALELLEKMGFQVNPNHKLCASIAEVAKYYEYWDTERLNLPYMTDGVVVKLNSFKLQEQLGFTQKFPRWAIALKYPAEEAPTRVENIAVNVGRTGALTPLAEMRPVQLAGTTVSRATLHNSDRIAQLDIRIGDTVIVRKAGEIIPEVVRVLKELRPAETEPFVMPTHCPVCDQAVVRESGEAVTRCVNASCAAILKGSIEHWVSRDALDIKGLGEKLVHQLVDKVLVHSVADLYELTAEKLCALERMGQKSAEKLVDAIAQSKNQPWSRVLYGLGIRHVGSVNAQLLTQKYFTVEQLATAKQSDIEGIYGIGAEIAQSVYQWFRIDANQRLIERLQAEGLQLTAPEETKAFGDGNQIFAGKTFVVTGTLPTLKRDEAKALIQKAGGKVTDSVSKKTDYLVVGEDAGSKLEKALSLGITQLSEAQLLEMLNE</sequence>
<feature type="chain" id="PRO_0000380432" description="DNA ligase">
    <location>
        <begin position="1"/>
        <end position="678"/>
    </location>
</feature>
<feature type="domain" description="BRCT" evidence="1">
    <location>
        <begin position="600"/>
        <end position="678"/>
    </location>
</feature>
<feature type="active site" description="N6-AMP-lysine intermediate" evidence="1">
    <location>
        <position position="118"/>
    </location>
</feature>
<feature type="binding site" evidence="1">
    <location>
        <begin position="35"/>
        <end position="39"/>
    </location>
    <ligand>
        <name>NAD(+)</name>
        <dbReference type="ChEBI" id="CHEBI:57540"/>
    </ligand>
</feature>
<feature type="binding site" evidence="1">
    <location>
        <begin position="84"/>
        <end position="85"/>
    </location>
    <ligand>
        <name>NAD(+)</name>
        <dbReference type="ChEBI" id="CHEBI:57540"/>
    </ligand>
</feature>
<feature type="binding site" evidence="1">
    <location>
        <position position="116"/>
    </location>
    <ligand>
        <name>NAD(+)</name>
        <dbReference type="ChEBI" id="CHEBI:57540"/>
    </ligand>
</feature>
<feature type="binding site" evidence="1">
    <location>
        <position position="139"/>
    </location>
    <ligand>
        <name>NAD(+)</name>
        <dbReference type="ChEBI" id="CHEBI:57540"/>
    </ligand>
</feature>
<feature type="binding site" evidence="1">
    <location>
        <position position="178"/>
    </location>
    <ligand>
        <name>NAD(+)</name>
        <dbReference type="ChEBI" id="CHEBI:57540"/>
    </ligand>
</feature>
<feature type="binding site" evidence="1">
    <location>
        <position position="297"/>
    </location>
    <ligand>
        <name>NAD(+)</name>
        <dbReference type="ChEBI" id="CHEBI:57540"/>
    </ligand>
</feature>
<feature type="binding site" evidence="1">
    <location>
        <position position="321"/>
    </location>
    <ligand>
        <name>NAD(+)</name>
        <dbReference type="ChEBI" id="CHEBI:57540"/>
    </ligand>
</feature>
<feature type="binding site" evidence="1">
    <location>
        <position position="415"/>
    </location>
    <ligand>
        <name>Zn(2+)</name>
        <dbReference type="ChEBI" id="CHEBI:29105"/>
    </ligand>
</feature>
<feature type="binding site" evidence="1">
    <location>
        <position position="418"/>
    </location>
    <ligand>
        <name>Zn(2+)</name>
        <dbReference type="ChEBI" id="CHEBI:29105"/>
    </ligand>
</feature>
<feature type="binding site" evidence="1">
    <location>
        <position position="433"/>
    </location>
    <ligand>
        <name>Zn(2+)</name>
        <dbReference type="ChEBI" id="CHEBI:29105"/>
    </ligand>
</feature>
<feature type="binding site" evidence="1">
    <location>
        <position position="438"/>
    </location>
    <ligand>
        <name>Zn(2+)</name>
        <dbReference type="ChEBI" id="CHEBI:29105"/>
    </ligand>
</feature>
<protein>
    <recommendedName>
        <fullName evidence="1">DNA ligase</fullName>
        <ecNumber evidence="1">6.5.1.2</ecNumber>
    </recommendedName>
    <alternativeName>
        <fullName evidence="1">Polydeoxyribonucleotide synthase [NAD(+)]</fullName>
    </alternativeName>
</protein>
<comment type="function">
    <text evidence="1">DNA ligase that catalyzes the formation of phosphodiester linkages between 5'-phosphoryl and 3'-hydroxyl groups in double-stranded DNA using NAD as a coenzyme and as the energy source for the reaction. It is essential for DNA replication and repair of damaged DNA.</text>
</comment>
<comment type="catalytic activity">
    <reaction evidence="1">
        <text>NAD(+) + (deoxyribonucleotide)n-3'-hydroxyl + 5'-phospho-(deoxyribonucleotide)m = (deoxyribonucleotide)n+m + AMP + beta-nicotinamide D-nucleotide.</text>
        <dbReference type="EC" id="6.5.1.2"/>
    </reaction>
</comment>
<comment type="cofactor">
    <cofactor evidence="1">
        <name>Mg(2+)</name>
        <dbReference type="ChEBI" id="CHEBI:18420"/>
    </cofactor>
    <cofactor evidence="1">
        <name>Mn(2+)</name>
        <dbReference type="ChEBI" id="CHEBI:29035"/>
    </cofactor>
</comment>
<comment type="similarity">
    <text evidence="1">Belongs to the NAD-dependent DNA ligase family. LigA subfamily.</text>
</comment>
<gene>
    <name evidence="1" type="primary">ligA</name>
    <name type="ordered locus">Npun_F0173</name>
</gene>
<accession>B2J3P0</accession>
<organism>
    <name type="scientific">Nostoc punctiforme (strain ATCC 29133 / PCC 73102)</name>
    <dbReference type="NCBI Taxonomy" id="63737"/>
    <lineage>
        <taxon>Bacteria</taxon>
        <taxon>Bacillati</taxon>
        <taxon>Cyanobacteriota</taxon>
        <taxon>Cyanophyceae</taxon>
        <taxon>Nostocales</taxon>
        <taxon>Nostocaceae</taxon>
        <taxon>Nostoc</taxon>
    </lineage>
</organism>
<keyword id="KW-0227">DNA damage</keyword>
<keyword id="KW-0234">DNA repair</keyword>
<keyword id="KW-0235">DNA replication</keyword>
<keyword id="KW-0436">Ligase</keyword>
<keyword id="KW-0460">Magnesium</keyword>
<keyword id="KW-0464">Manganese</keyword>
<keyword id="KW-0479">Metal-binding</keyword>
<keyword id="KW-0520">NAD</keyword>
<keyword id="KW-1185">Reference proteome</keyword>
<keyword id="KW-0862">Zinc</keyword>
<proteinExistence type="inferred from homology"/>